<organism>
    <name type="scientific">Xanthomonas campestris pv. campestris (strain ATCC 33913 / DSM 3586 / NCPPB 528 / LMG 568 / P 25)</name>
    <dbReference type="NCBI Taxonomy" id="190485"/>
    <lineage>
        <taxon>Bacteria</taxon>
        <taxon>Pseudomonadati</taxon>
        <taxon>Pseudomonadota</taxon>
        <taxon>Gammaproteobacteria</taxon>
        <taxon>Lysobacterales</taxon>
        <taxon>Lysobacteraceae</taxon>
        <taxon>Xanthomonas</taxon>
    </lineage>
</organism>
<keyword id="KW-0131">Cell cycle</keyword>
<keyword id="KW-0132">Cell division</keyword>
<keyword id="KW-0133">Cell shape</keyword>
<keyword id="KW-0961">Cell wall biogenesis/degradation</keyword>
<keyword id="KW-0963">Cytoplasm</keyword>
<keyword id="KW-0573">Peptidoglycan synthesis</keyword>
<keyword id="KW-0670">Pyruvate</keyword>
<keyword id="KW-1185">Reference proteome</keyword>
<keyword id="KW-0808">Transferase</keyword>
<comment type="function">
    <text evidence="1">Cell wall formation. Adds enolpyruvyl to UDP-N-acetylglucosamine.</text>
</comment>
<comment type="catalytic activity">
    <reaction evidence="1">
        <text>phosphoenolpyruvate + UDP-N-acetyl-alpha-D-glucosamine = UDP-N-acetyl-3-O-(1-carboxyvinyl)-alpha-D-glucosamine + phosphate</text>
        <dbReference type="Rhea" id="RHEA:18681"/>
        <dbReference type="ChEBI" id="CHEBI:43474"/>
        <dbReference type="ChEBI" id="CHEBI:57705"/>
        <dbReference type="ChEBI" id="CHEBI:58702"/>
        <dbReference type="ChEBI" id="CHEBI:68483"/>
        <dbReference type="EC" id="2.5.1.7"/>
    </reaction>
</comment>
<comment type="pathway">
    <text evidence="1">Cell wall biogenesis; peptidoglycan biosynthesis.</text>
</comment>
<comment type="subcellular location">
    <subcellularLocation>
        <location evidence="1">Cytoplasm</location>
    </subcellularLocation>
</comment>
<comment type="similarity">
    <text evidence="1">Belongs to the EPSP synthase family. MurA subfamily.</text>
</comment>
<gene>
    <name evidence="1" type="primary">murA</name>
    <name type="ordered locus">XCC2795</name>
</gene>
<evidence type="ECO:0000255" key="1">
    <source>
        <dbReference type="HAMAP-Rule" id="MF_00111"/>
    </source>
</evidence>
<feature type="chain" id="PRO_0000178954" description="UDP-N-acetylglucosamine 1-carboxyvinyltransferase">
    <location>
        <begin position="1"/>
        <end position="424"/>
    </location>
</feature>
<feature type="active site" description="Proton donor" evidence="1">
    <location>
        <position position="122"/>
    </location>
</feature>
<feature type="binding site" evidence="1">
    <location>
        <begin position="22"/>
        <end position="23"/>
    </location>
    <ligand>
        <name>phosphoenolpyruvate</name>
        <dbReference type="ChEBI" id="CHEBI:58702"/>
    </ligand>
</feature>
<feature type="binding site" evidence="1">
    <location>
        <position position="98"/>
    </location>
    <ligand>
        <name>UDP-N-acetyl-alpha-D-glucosamine</name>
        <dbReference type="ChEBI" id="CHEBI:57705"/>
    </ligand>
</feature>
<feature type="binding site" evidence="1">
    <location>
        <begin position="127"/>
        <end position="131"/>
    </location>
    <ligand>
        <name>UDP-N-acetyl-alpha-D-glucosamine</name>
        <dbReference type="ChEBI" id="CHEBI:57705"/>
    </ligand>
</feature>
<feature type="binding site" evidence="1">
    <location>
        <position position="312"/>
    </location>
    <ligand>
        <name>UDP-N-acetyl-alpha-D-glucosamine</name>
        <dbReference type="ChEBI" id="CHEBI:57705"/>
    </ligand>
</feature>
<feature type="binding site" evidence="1">
    <location>
        <position position="334"/>
    </location>
    <ligand>
        <name>UDP-N-acetyl-alpha-D-glucosamine</name>
        <dbReference type="ChEBI" id="CHEBI:57705"/>
    </ligand>
</feature>
<feature type="modified residue" description="2-(S-cysteinyl)pyruvic acid O-phosphothioketal" evidence="1">
    <location>
        <position position="122"/>
    </location>
</feature>
<name>MURA_XANCP</name>
<dbReference type="EC" id="2.5.1.7" evidence="1"/>
<dbReference type="EMBL" id="AE008922">
    <property type="protein sequence ID" value="AAM42067.1"/>
    <property type="molecule type" value="Genomic_DNA"/>
</dbReference>
<dbReference type="RefSeq" id="NP_638143.1">
    <property type="nucleotide sequence ID" value="NC_003902.1"/>
</dbReference>
<dbReference type="RefSeq" id="WP_011037922.1">
    <property type="nucleotide sequence ID" value="NC_003902.1"/>
</dbReference>
<dbReference type="SMR" id="Q8P719"/>
<dbReference type="STRING" id="190485.XCC2795"/>
<dbReference type="EnsemblBacteria" id="AAM42067">
    <property type="protein sequence ID" value="AAM42067"/>
    <property type="gene ID" value="XCC2795"/>
</dbReference>
<dbReference type="KEGG" id="xcc:XCC2795"/>
<dbReference type="PATRIC" id="fig|190485.4.peg.2983"/>
<dbReference type="eggNOG" id="COG0766">
    <property type="taxonomic scope" value="Bacteria"/>
</dbReference>
<dbReference type="HOGENOM" id="CLU_027387_0_0_6"/>
<dbReference type="OrthoDB" id="9803760at2"/>
<dbReference type="UniPathway" id="UPA00219"/>
<dbReference type="Proteomes" id="UP000001010">
    <property type="component" value="Chromosome"/>
</dbReference>
<dbReference type="GO" id="GO:0005737">
    <property type="term" value="C:cytoplasm"/>
    <property type="evidence" value="ECO:0007669"/>
    <property type="project" value="UniProtKB-SubCell"/>
</dbReference>
<dbReference type="GO" id="GO:0008760">
    <property type="term" value="F:UDP-N-acetylglucosamine 1-carboxyvinyltransferase activity"/>
    <property type="evidence" value="ECO:0000318"/>
    <property type="project" value="GO_Central"/>
</dbReference>
<dbReference type="GO" id="GO:0051301">
    <property type="term" value="P:cell division"/>
    <property type="evidence" value="ECO:0007669"/>
    <property type="project" value="UniProtKB-KW"/>
</dbReference>
<dbReference type="GO" id="GO:0071555">
    <property type="term" value="P:cell wall organization"/>
    <property type="evidence" value="ECO:0007669"/>
    <property type="project" value="UniProtKB-KW"/>
</dbReference>
<dbReference type="GO" id="GO:0009252">
    <property type="term" value="P:peptidoglycan biosynthetic process"/>
    <property type="evidence" value="ECO:0000318"/>
    <property type="project" value="GO_Central"/>
</dbReference>
<dbReference type="GO" id="GO:0008360">
    <property type="term" value="P:regulation of cell shape"/>
    <property type="evidence" value="ECO:0007669"/>
    <property type="project" value="UniProtKB-KW"/>
</dbReference>
<dbReference type="GO" id="GO:0019277">
    <property type="term" value="P:UDP-N-acetylgalactosamine biosynthetic process"/>
    <property type="evidence" value="ECO:0007669"/>
    <property type="project" value="InterPro"/>
</dbReference>
<dbReference type="CDD" id="cd01555">
    <property type="entry name" value="UdpNAET"/>
    <property type="match status" value="1"/>
</dbReference>
<dbReference type="FunFam" id="3.65.10.10:FF:000002">
    <property type="entry name" value="UDP-N-acetylglucosamine 1-carboxyvinyltransferase"/>
    <property type="match status" value="1"/>
</dbReference>
<dbReference type="Gene3D" id="3.65.10.10">
    <property type="entry name" value="Enolpyruvate transferase domain"/>
    <property type="match status" value="2"/>
</dbReference>
<dbReference type="HAMAP" id="MF_00111">
    <property type="entry name" value="MurA"/>
    <property type="match status" value="1"/>
</dbReference>
<dbReference type="InterPro" id="IPR001986">
    <property type="entry name" value="Enolpyruvate_Tfrase_dom"/>
</dbReference>
<dbReference type="InterPro" id="IPR036968">
    <property type="entry name" value="Enolpyruvate_Tfrase_sf"/>
</dbReference>
<dbReference type="InterPro" id="IPR050068">
    <property type="entry name" value="MurA_subfamily"/>
</dbReference>
<dbReference type="InterPro" id="IPR013792">
    <property type="entry name" value="RNA3'P_cycl/enolpyr_Trfase_a/b"/>
</dbReference>
<dbReference type="InterPro" id="IPR005750">
    <property type="entry name" value="UDP_GlcNAc_COvinyl_MurA"/>
</dbReference>
<dbReference type="NCBIfam" id="TIGR01072">
    <property type="entry name" value="murA"/>
    <property type="match status" value="1"/>
</dbReference>
<dbReference type="NCBIfam" id="NF006873">
    <property type="entry name" value="PRK09369.1"/>
    <property type="match status" value="1"/>
</dbReference>
<dbReference type="PANTHER" id="PTHR43783">
    <property type="entry name" value="UDP-N-ACETYLGLUCOSAMINE 1-CARBOXYVINYLTRANSFERASE"/>
    <property type="match status" value="1"/>
</dbReference>
<dbReference type="PANTHER" id="PTHR43783:SF1">
    <property type="entry name" value="UDP-N-ACETYLGLUCOSAMINE 1-CARBOXYVINYLTRANSFERASE"/>
    <property type="match status" value="1"/>
</dbReference>
<dbReference type="Pfam" id="PF00275">
    <property type="entry name" value="EPSP_synthase"/>
    <property type="match status" value="1"/>
</dbReference>
<dbReference type="SUPFAM" id="SSF55205">
    <property type="entry name" value="EPT/RTPC-like"/>
    <property type="match status" value="1"/>
</dbReference>
<protein>
    <recommendedName>
        <fullName evidence="1">UDP-N-acetylglucosamine 1-carboxyvinyltransferase</fullName>
        <ecNumber evidence="1">2.5.1.7</ecNumber>
    </recommendedName>
    <alternativeName>
        <fullName evidence="1">Enoylpyruvate transferase</fullName>
    </alternativeName>
    <alternativeName>
        <fullName evidence="1">UDP-N-acetylglucosamine enolpyruvyl transferase</fullName>
        <shortName evidence="1">EPT</shortName>
    </alternativeName>
</protein>
<reference key="1">
    <citation type="journal article" date="2002" name="Nature">
        <title>Comparison of the genomes of two Xanthomonas pathogens with differing host specificities.</title>
        <authorList>
            <person name="da Silva A.C.R."/>
            <person name="Ferro J.A."/>
            <person name="Reinach F.C."/>
            <person name="Farah C.S."/>
            <person name="Furlan L.R."/>
            <person name="Quaggio R.B."/>
            <person name="Monteiro-Vitorello C.B."/>
            <person name="Van Sluys M.A."/>
            <person name="Almeida N.F. Jr."/>
            <person name="Alves L.M.C."/>
            <person name="do Amaral A.M."/>
            <person name="Bertolini M.C."/>
            <person name="Camargo L.E.A."/>
            <person name="Camarotte G."/>
            <person name="Cannavan F."/>
            <person name="Cardozo J."/>
            <person name="Chambergo F."/>
            <person name="Ciapina L.P."/>
            <person name="Cicarelli R.M.B."/>
            <person name="Coutinho L.L."/>
            <person name="Cursino-Santos J.R."/>
            <person name="El-Dorry H."/>
            <person name="Faria J.B."/>
            <person name="Ferreira A.J.S."/>
            <person name="Ferreira R.C.C."/>
            <person name="Ferro M.I.T."/>
            <person name="Formighieri E.F."/>
            <person name="Franco M.C."/>
            <person name="Greggio C.C."/>
            <person name="Gruber A."/>
            <person name="Katsuyama A.M."/>
            <person name="Kishi L.T."/>
            <person name="Leite R.P."/>
            <person name="Lemos E.G.M."/>
            <person name="Lemos M.V.F."/>
            <person name="Locali E.C."/>
            <person name="Machado M.A."/>
            <person name="Madeira A.M.B.N."/>
            <person name="Martinez-Rossi N.M."/>
            <person name="Martins E.C."/>
            <person name="Meidanis J."/>
            <person name="Menck C.F.M."/>
            <person name="Miyaki C.Y."/>
            <person name="Moon D.H."/>
            <person name="Moreira L.M."/>
            <person name="Novo M.T.M."/>
            <person name="Okura V.K."/>
            <person name="Oliveira M.C."/>
            <person name="Oliveira V.R."/>
            <person name="Pereira H.A."/>
            <person name="Rossi A."/>
            <person name="Sena J.A.D."/>
            <person name="Silva C."/>
            <person name="de Souza R.F."/>
            <person name="Spinola L.A.F."/>
            <person name="Takita M.A."/>
            <person name="Tamura R.E."/>
            <person name="Teixeira E.C."/>
            <person name="Tezza R.I.D."/>
            <person name="Trindade dos Santos M."/>
            <person name="Truffi D."/>
            <person name="Tsai S.M."/>
            <person name="White F.F."/>
            <person name="Setubal J.C."/>
            <person name="Kitajima J.P."/>
        </authorList>
    </citation>
    <scope>NUCLEOTIDE SEQUENCE [LARGE SCALE GENOMIC DNA]</scope>
    <source>
        <strain>ATCC 33913 / DSM 3586 / NCPPB 528 / LMG 568 / P 25</strain>
    </source>
</reference>
<sequence>MAKIVVTGGQALHGEVHISGAKNAVLPILCATLLADAPVEISNVPHLHDVITTVKLLSELGAEVTIDEGTLAKGRSILVDPRSVTHQIAPYELVKTMRASILVLGPLLARYGTAEVSLPGGCAIGSRPVDQHIKGLQALGADISVENGYIKATSNGRLKGGRYVFDMVSVTGTENVLMAAVLAEGTTVLENAAMEPEVTDLADCLIALGAQIEGAGTPRITVQGVERLGGGHHAVLPDRIETGTFLVAAAMTGGSVTVRRARPDTLDAVLDKLTEAGATITTTADSVTLDMHGKRPRAVNLTTAPYPAFPTDMQAQFMALNCVADGVGVINETIFENRFMHVNELLRLGADIQVEGHTAIVRGAERLSGAPVMATDLRASASLILAGLVADGDTTIDRIYHLDRGYENIEEKLGALGATIRRIA</sequence>
<accession>Q8P719</accession>
<proteinExistence type="inferred from homology"/>